<accession>Q08622</accession>
<accession>D6W2R1</accession>
<sequence>MLNLCHALRGVRQFSCSVIVKVKCASCSIKLQDQDPSKPGYYTKPKSLPDSKLNPDLQDLKYLLFSQDIQLSKQATQNDPDLKTKRDLLLRVICKRCSNALHHNNYNPEEFPESTLNDILNYVPRGSNVMHIVPFVEFPLHLDPNVLKRNDLDTTLVLTKSDQVFKDKNAVSKKVPIFMKQFLKNTLRIDSNKTFAISALKNWNISMFYNYFKNYTYLLGNPNVGKSTLINTLLQKYLGYKVKIDSTGKINSPSEEVMQEAFTNPKNFFKIQAAGVSHIPNLTRSVQAYQVGGKILFDLPGYSTSTSRLRLEELIDERWLQRLRKTDLFNRKHIKQKTYESMKGTSQGGCYTVGGIFYLVPPKGSINQIVKYIPGPSKTFKNIEKGIDVFNSCNSSSGTHPLSRYCGIKSVICEKSQYKRYAIPPFIGSIEIVLKDIGYILLRTTGRYEFKGLHEIWIPRGIQVGIREPLENLIESGYQRYIETNGKESSCPRDRPIISSLYEMAPDEADTLNAVKKSYLEKTEKDLSARRFVDDDPYDLVQHLEKKKNPYWYYQW</sequence>
<dbReference type="EMBL" id="Z75113">
    <property type="protein sequence ID" value="CAA99420.1"/>
    <property type="molecule type" value="Genomic_DNA"/>
</dbReference>
<dbReference type="EMBL" id="BK006948">
    <property type="protein sequence ID" value="DAA10977.1"/>
    <property type="molecule type" value="Genomic_DNA"/>
</dbReference>
<dbReference type="PIR" id="S67097">
    <property type="entry name" value="S67097"/>
</dbReference>
<dbReference type="RefSeq" id="NP_014848.1">
    <property type="nucleotide sequence ID" value="NM_001183624.1"/>
</dbReference>
<dbReference type="SMR" id="Q08622"/>
<dbReference type="BioGRID" id="34600">
    <property type="interactions" value="458"/>
</dbReference>
<dbReference type="DIP" id="DIP-6701N"/>
<dbReference type="FunCoup" id="Q08622">
    <property type="interactions" value="132"/>
</dbReference>
<dbReference type="IntAct" id="Q08622">
    <property type="interactions" value="9"/>
</dbReference>
<dbReference type="STRING" id="4932.YOR205C"/>
<dbReference type="PaxDb" id="4932-YOR205C"/>
<dbReference type="PeptideAtlas" id="Q08622"/>
<dbReference type="EnsemblFungi" id="YOR205C_mRNA">
    <property type="protein sequence ID" value="YOR205C"/>
    <property type="gene ID" value="YOR205C"/>
</dbReference>
<dbReference type="GeneID" id="854380"/>
<dbReference type="KEGG" id="sce:YOR205C"/>
<dbReference type="AGR" id="SGD:S000005731"/>
<dbReference type="SGD" id="S000005731">
    <property type="gene designation" value="GEP3"/>
</dbReference>
<dbReference type="VEuPathDB" id="FungiDB:YOR205C"/>
<dbReference type="eggNOG" id="ENOG502S0UP">
    <property type="taxonomic scope" value="Eukaryota"/>
</dbReference>
<dbReference type="HOGENOM" id="CLU_025792_1_0_1"/>
<dbReference type="InParanoid" id="Q08622"/>
<dbReference type="OMA" id="IIPPFYG"/>
<dbReference type="OrthoDB" id="1696305at2759"/>
<dbReference type="BioCyc" id="YEAST:G3O-33709-MONOMER"/>
<dbReference type="BioGRID-ORCS" id="854380">
    <property type="hits" value="2 hits in 10 CRISPR screens"/>
</dbReference>
<dbReference type="PRO" id="PR:Q08622"/>
<dbReference type="Proteomes" id="UP000002311">
    <property type="component" value="Chromosome XV"/>
</dbReference>
<dbReference type="RNAct" id="Q08622">
    <property type="molecule type" value="protein"/>
</dbReference>
<dbReference type="GO" id="GO:0005743">
    <property type="term" value="C:mitochondrial inner membrane"/>
    <property type="evidence" value="ECO:0000314"/>
    <property type="project" value="SGD"/>
</dbReference>
<dbReference type="GO" id="GO:0005739">
    <property type="term" value="C:mitochondrion"/>
    <property type="evidence" value="ECO:0007005"/>
    <property type="project" value="SGD"/>
</dbReference>
<dbReference type="GO" id="GO:0005525">
    <property type="term" value="F:GTP binding"/>
    <property type="evidence" value="ECO:0007669"/>
    <property type="project" value="InterPro"/>
</dbReference>
<dbReference type="GO" id="GO:0030490">
    <property type="term" value="P:maturation of SSU-rRNA"/>
    <property type="evidence" value="ECO:0000315"/>
    <property type="project" value="SGD"/>
</dbReference>
<dbReference type="CDD" id="cd01855">
    <property type="entry name" value="YqeH"/>
    <property type="match status" value="1"/>
</dbReference>
<dbReference type="Gene3D" id="3.40.50.300">
    <property type="entry name" value="P-loop containing nucleotide triphosphate hydrolases"/>
    <property type="match status" value="1"/>
</dbReference>
<dbReference type="InterPro" id="IPR030378">
    <property type="entry name" value="G_CP_dom"/>
</dbReference>
<dbReference type="InterPro" id="IPR006073">
    <property type="entry name" value="GTP-bd"/>
</dbReference>
<dbReference type="InterPro" id="IPR050896">
    <property type="entry name" value="Mito_lipid_metab_GTPase"/>
</dbReference>
<dbReference type="InterPro" id="IPR027417">
    <property type="entry name" value="P-loop_NTPase"/>
</dbReference>
<dbReference type="PANTHER" id="PTHR46434">
    <property type="entry name" value="GENETIC INTERACTOR OF PROHIBITINS 3, MITOCHONDRIAL"/>
    <property type="match status" value="1"/>
</dbReference>
<dbReference type="PANTHER" id="PTHR46434:SF1">
    <property type="entry name" value="GENETIC INTERACTOR OF PROHIBITINS 3, MITOCHONDRIAL"/>
    <property type="match status" value="1"/>
</dbReference>
<dbReference type="Pfam" id="PF01926">
    <property type="entry name" value="MMR_HSR1"/>
    <property type="match status" value="1"/>
</dbReference>
<dbReference type="SUPFAM" id="SSF52540">
    <property type="entry name" value="P-loop containing nucleoside triphosphate hydrolases"/>
    <property type="match status" value="1"/>
</dbReference>
<dbReference type="PROSITE" id="PS51721">
    <property type="entry name" value="G_CP"/>
    <property type="match status" value="1"/>
</dbReference>
<comment type="function">
    <text evidence="7">Interacts genetically with prohibitins and thus may be involved in the mitochondrial lipid metabolism.</text>
</comment>
<comment type="subcellular location">
    <subcellularLocation>
        <location evidence="3 5">Mitochondrion</location>
    </subcellularLocation>
</comment>
<comment type="disruption phenotype">
    <text evidence="6 7">Increases frequency of mitochondrial genome loss.</text>
</comment>
<comment type="miscellaneous">
    <text evidence="4">Present with 937 molecules/cell in log phase SD medium.</text>
</comment>
<comment type="similarity">
    <text evidence="2">Belongs to the TRAFAC class YlqF/YawG GTPase family. GEP3 subfamily.</text>
</comment>
<protein>
    <recommendedName>
        <fullName>Genetic interactor of prohibitins 3, mitochondrial</fullName>
    </recommendedName>
    <alternativeName>
        <fullName>Altered inheritance of mitochondria protein 40</fullName>
    </alternativeName>
    <alternativeName>
        <fullName>Found in mitochondrial proteome protein 38</fullName>
    </alternativeName>
</protein>
<organism>
    <name type="scientific">Saccharomyces cerevisiae (strain ATCC 204508 / S288c)</name>
    <name type="common">Baker's yeast</name>
    <dbReference type="NCBI Taxonomy" id="559292"/>
    <lineage>
        <taxon>Eukaryota</taxon>
        <taxon>Fungi</taxon>
        <taxon>Dikarya</taxon>
        <taxon>Ascomycota</taxon>
        <taxon>Saccharomycotina</taxon>
        <taxon>Saccharomycetes</taxon>
        <taxon>Saccharomycetales</taxon>
        <taxon>Saccharomycetaceae</taxon>
        <taxon>Saccharomyces</taxon>
    </lineage>
</organism>
<feature type="transit peptide" description="Mitochondrion" evidence="1">
    <location>
        <begin position="1"/>
        <end position="21"/>
    </location>
</feature>
<feature type="chain" id="PRO_0000237640" description="Genetic interactor of prohibitins 3, mitochondrial">
    <location>
        <begin position="22"/>
        <end position="556"/>
    </location>
</feature>
<feature type="domain" description="CP-type G" evidence="2">
    <location>
        <begin position="113"/>
        <end position="305"/>
    </location>
</feature>
<gene>
    <name type="primary">GEP3</name>
    <name type="synonym">AIM40</name>
    <name type="synonym">FMP48</name>
    <name type="ordered locus">YOR205C</name>
</gene>
<proteinExistence type="evidence at protein level"/>
<name>GEP3_YEAST</name>
<reference key="1">
    <citation type="journal article" date="1997" name="Nature">
        <title>The nucleotide sequence of Saccharomyces cerevisiae chromosome XV.</title>
        <authorList>
            <person name="Dujon B."/>
            <person name="Albermann K."/>
            <person name="Aldea M."/>
            <person name="Alexandraki D."/>
            <person name="Ansorge W."/>
            <person name="Arino J."/>
            <person name="Benes V."/>
            <person name="Bohn C."/>
            <person name="Bolotin-Fukuhara M."/>
            <person name="Bordonne R."/>
            <person name="Boyer J."/>
            <person name="Camasses A."/>
            <person name="Casamayor A."/>
            <person name="Casas C."/>
            <person name="Cheret G."/>
            <person name="Cziepluch C."/>
            <person name="Daignan-Fornier B."/>
            <person name="Dang V.-D."/>
            <person name="de Haan M."/>
            <person name="Delius H."/>
            <person name="Durand P."/>
            <person name="Fairhead C."/>
            <person name="Feldmann H."/>
            <person name="Gaillon L."/>
            <person name="Galisson F."/>
            <person name="Gamo F.-J."/>
            <person name="Gancedo C."/>
            <person name="Goffeau A."/>
            <person name="Goulding S.E."/>
            <person name="Grivell L.A."/>
            <person name="Habbig B."/>
            <person name="Hand N.J."/>
            <person name="Hani J."/>
            <person name="Hattenhorst U."/>
            <person name="Hebling U."/>
            <person name="Hernando Y."/>
            <person name="Herrero E."/>
            <person name="Heumann K."/>
            <person name="Hiesel R."/>
            <person name="Hilger F."/>
            <person name="Hofmann B."/>
            <person name="Hollenberg C.P."/>
            <person name="Hughes B."/>
            <person name="Jauniaux J.-C."/>
            <person name="Kalogeropoulos A."/>
            <person name="Katsoulou C."/>
            <person name="Kordes E."/>
            <person name="Lafuente M.J."/>
            <person name="Landt O."/>
            <person name="Louis E.J."/>
            <person name="Maarse A.C."/>
            <person name="Madania A."/>
            <person name="Mannhaupt G."/>
            <person name="Marck C."/>
            <person name="Martin R.P."/>
            <person name="Mewes H.-W."/>
            <person name="Michaux G."/>
            <person name="Paces V."/>
            <person name="Parle-McDermott A.G."/>
            <person name="Pearson B.M."/>
            <person name="Perrin A."/>
            <person name="Pettersson B."/>
            <person name="Poch O."/>
            <person name="Pohl T.M."/>
            <person name="Poirey R."/>
            <person name="Portetelle D."/>
            <person name="Pujol A."/>
            <person name="Purnelle B."/>
            <person name="Ramezani Rad M."/>
            <person name="Rechmann S."/>
            <person name="Schwager C."/>
            <person name="Schweizer M."/>
            <person name="Sor F."/>
            <person name="Sterky F."/>
            <person name="Tarassov I.A."/>
            <person name="Teodoru C."/>
            <person name="Tettelin H."/>
            <person name="Thierry A."/>
            <person name="Tobiasch E."/>
            <person name="Tzermia M."/>
            <person name="Uhlen M."/>
            <person name="Unseld M."/>
            <person name="Valens M."/>
            <person name="Vandenbol M."/>
            <person name="Vetter I."/>
            <person name="Vlcek C."/>
            <person name="Voet M."/>
            <person name="Volckaert G."/>
            <person name="Voss H."/>
            <person name="Wambutt R."/>
            <person name="Wedler H."/>
            <person name="Wiemann S."/>
            <person name="Winsor B."/>
            <person name="Wolfe K.H."/>
            <person name="Zollner A."/>
            <person name="Zumstein E."/>
            <person name="Kleine K."/>
        </authorList>
    </citation>
    <scope>NUCLEOTIDE SEQUENCE [LARGE SCALE GENOMIC DNA]</scope>
    <source>
        <strain>ATCC 204508 / S288c</strain>
    </source>
</reference>
<reference key="2">
    <citation type="journal article" date="2014" name="G3 (Bethesda)">
        <title>The reference genome sequence of Saccharomyces cerevisiae: Then and now.</title>
        <authorList>
            <person name="Engel S.R."/>
            <person name="Dietrich F.S."/>
            <person name="Fisk D.G."/>
            <person name="Binkley G."/>
            <person name="Balakrishnan R."/>
            <person name="Costanzo M.C."/>
            <person name="Dwight S.S."/>
            <person name="Hitz B.C."/>
            <person name="Karra K."/>
            <person name="Nash R.S."/>
            <person name="Weng S."/>
            <person name="Wong E.D."/>
            <person name="Lloyd P."/>
            <person name="Skrzypek M.S."/>
            <person name="Miyasato S.R."/>
            <person name="Simison M."/>
            <person name="Cherry J.M."/>
        </authorList>
    </citation>
    <scope>GENOME REANNOTATION</scope>
    <source>
        <strain>ATCC 204508 / S288c</strain>
    </source>
</reference>
<reference key="3">
    <citation type="journal article" date="2003" name="Nature">
        <title>Global analysis of protein localization in budding yeast.</title>
        <authorList>
            <person name="Huh W.-K."/>
            <person name="Falvo J.V."/>
            <person name="Gerke L.C."/>
            <person name="Carroll A.S."/>
            <person name="Howson R.W."/>
            <person name="Weissman J.S."/>
            <person name="O'Shea E.K."/>
        </authorList>
    </citation>
    <scope>SUBCELLULAR LOCATION [LARGE SCALE ANALYSIS]</scope>
</reference>
<reference key="4">
    <citation type="journal article" date="2003" name="Nature">
        <title>Global analysis of protein expression in yeast.</title>
        <authorList>
            <person name="Ghaemmaghami S."/>
            <person name="Huh W.-K."/>
            <person name="Bower K."/>
            <person name="Howson R.W."/>
            <person name="Belle A."/>
            <person name="Dephoure N."/>
            <person name="O'Shea E.K."/>
            <person name="Weissman J.S."/>
        </authorList>
    </citation>
    <scope>LEVEL OF PROTEIN EXPRESSION [LARGE SCALE ANALYSIS]</scope>
</reference>
<reference key="5">
    <citation type="journal article" date="2003" name="Proc. Natl. Acad. Sci. U.S.A.">
        <title>The proteome of Saccharomyces cerevisiae mitochondria.</title>
        <authorList>
            <person name="Sickmann A."/>
            <person name="Reinders J."/>
            <person name="Wagner Y."/>
            <person name="Joppich C."/>
            <person name="Zahedi R.P."/>
            <person name="Meyer H.E."/>
            <person name="Schoenfisch B."/>
            <person name="Perschil I."/>
            <person name="Chacinska A."/>
            <person name="Guiard B."/>
            <person name="Rehling P."/>
            <person name="Pfanner N."/>
            <person name="Meisinger C."/>
        </authorList>
    </citation>
    <scope>SUBCELLULAR LOCATION [LARGE SCALE ANALYSIS]</scope>
    <source>
        <strain>ATCC 76625 / YPH499</strain>
    </source>
</reference>
<reference key="6">
    <citation type="journal article" date="2009" name="Genome Biol.">
        <title>Genome-wide deletion mutant analysis reveals genes required for respiratory growth, mitochondrial genome maintenance and mitochondrial protein synthesis in Saccharomyces cerevisiae.</title>
        <authorList>
            <person name="Merz S."/>
            <person name="Westermann B."/>
        </authorList>
    </citation>
    <scope>DISRUPTION PHENOTYPE</scope>
    <scope>FUNCTION</scope>
</reference>
<reference key="7">
    <citation type="journal article" date="2009" name="PLoS Genet.">
        <title>Computationally driven, quantitative experiments discover genes required for mitochondrial biogenesis.</title>
        <authorList>
            <person name="Hess D.C."/>
            <person name="Myers C.L."/>
            <person name="Huttenhower C."/>
            <person name="Hibbs M.A."/>
            <person name="Hayes A.P."/>
            <person name="Paw J."/>
            <person name="Clore J.J."/>
            <person name="Mendoza R.M."/>
            <person name="Luis B.S."/>
            <person name="Nislow C."/>
            <person name="Giaever G."/>
            <person name="Costanzo M."/>
            <person name="Troyanskaya O.G."/>
            <person name="Caudy A.A."/>
        </authorList>
    </citation>
    <scope>DISRUPTION PHENOTYPE</scope>
</reference>
<evidence type="ECO:0000255" key="1"/>
<evidence type="ECO:0000255" key="2">
    <source>
        <dbReference type="PROSITE-ProRule" id="PRU01058"/>
    </source>
</evidence>
<evidence type="ECO:0000269" key="3">
    <source>
    </source>
</evidence>
<evidence type="ECO:0000269" key="4">
    <source>
    </source>
</evidence>
<evidence type="ECO:0000269" key="5">
    <source>
    </source>
</evidence>
<evidence type="ECO:0000269" key="6">
    <source>
    </source>
</evidence>
<evidence type="ECO:0000269" key="7">
    <source>
    </source>
</evidence>
<keyword id="KW-0496">Mitochondrion</keyword>
<keyword id="KW-1185">Reference proteome</keyword>
<keyword id="KW-0809">Transit peptide</keyword>